<reference key="1">
    <citation type="journal article" date="1998" name="Neuron">
        <title>RGS9, a GTPase accelerator for phototransduction.</title>
        <authorList>
            <person name="He W."/>
            <person name="Cowan C.W."/>
            <person name="Wensel T.G."/>
        </authorList>
    </citation>
    <scope>NUCLEOTIDE SEQUENCE [MRNA]</scope>
</reference>
<reference key="2">
    <citation type="submission" date="2006-02" db="EMBL/GenBank/DDBJ databases">
        <authorList>
            <consortium name="NIH - Mammalian Gene Collection (MGC) project"/>
        </authorList>
    </citation>
    <scope>NUCLEOTIDE SEQUENCE [LARGE SCALE MRNA]</scope>
    <source>
        <strain>Hereford</strain>
        <tissue>Uterus</tissue>
    </source>
</reference>
<reference key="3">
    <citation type="journal article" date="1998" name="Biochem. Biophys. Res. Commun.">
        <title>Identification of the Gbeta5-RGS7 protein complex in the retina.</title>
        <authorList>
            <person name="Cabrera J.L."/>
            <person name="de Freitas F."/>
            <person name="Satpaev D.K."/>
            <person name="Slepak V.Z."/>
        </authorList>
    </citation>
    <scope>INTERACTION WITH GNB5</scope>
    <scope>TISSUE SPECIFICITY</scope>
    <scope>IDENTIFICATION BY MASS SPECTROMETRY</scope>
</reference>
<reference key="4">
    <citation type="journal article" date="2000" name="J. Neurochem.">
        <title>RGS7 is palmitoylated and exists as biochemically distinct forms.</title>
        <authorList>
            <person name="Rose J.J."/>
            <person name="Taylor J.B."/>
            <person name="Shi J."/>
            <person name="Cockett M.I."/>
            <person name="Jones P.G."/>
            <person name="Hepler J.R."/>
        </authorList>
    </citation>
    <scope>PALMITOYLATION</scope>
</reference>
<accession>O46470</accession>
<accession>Q2HJA0</accession>
<protein>
    <recommendedName>
        <fullName>Regulator of G-protein signaling 7</fullName>
        <shortName>RGS7</shortName>
    </recommendedName>
</protein>
<gene>
    <name type="primary">RGS7</name>
</gene>
<keyword id="KW-0002">3D-structure</keyword>
<keyword id="KW-1003">Cell membrane</keyword>
<keyword id="KW-0963">Cytoplasm</keyword>
<keyword id="KW-0343">GTPase activation</keyword>
<keyword id="KW-0449">Lipoprotein</keyword>
<keyword id="KW-0472">Membrane</keyword>
<keyword id="KW-0564">Palmitate</keyword>
<keyword id="KW-0597">Phosphoprotein</keyword>
<keyword id="KW-1185">Reference proteome</keyword>
<keyword id="KW-0734">Signal transduction inhibitor</keyword>
<keyword id="KW-0832">Ubl conjugation</keyword>
<feature type="chain" id="PRO_0000204195" description="Regulator of G-protein signaling 7">
    <location>
        <begin position="1"/>
        <end position="469"/>
    </location>
</feature>
<feature type="domain" description="DEP" evidence="4">
    <location>
        <begin position="37"/>
        <end position="112"/>
    </location>
</feature>
<feature type="domain" description="G protein gamma">
    <location>
        <begin position="255"/>
        <end position="316"/>
    </location>
</feature>
<feature type="domain" description="RGS" evidence="5">
    <location>
        <begin position="333"/>
        <end position="448"/>
    </location>
</feature>
<feature type="region of interest" description="Disordered" evidence="6">
    <location>
        <begin position="235"/>
        <end position="256"/>
    </location>
</feature>
<feature type="modified residue" description="Phosphoserine" evidence="3">
    <location>
        <position position="229"/>
    </location>
</feature>
<feature type="modified residue" description="Phosphoserine" evidence="1">
    <location>
        <position position="241"/>
    </location>
</feature>
<feature type="modified residue" description="Phosphothreonine" evidence="1">
    <location>
        <position position="243"/>
    </location>
</feature>
<feature type="modified residue" description="Phosphoserine" evidence="2">
    <location>
        <position position="434"/>
    </location>
</feature>
<feature type="helix" evidence="9">
    <location>
        <begin position="19"/>
        <end position="34"/>
    </location>
</feature>
<feature type="strand" evidence="9">
    <location>
        <begin position="37"/>
        <end position="40"/>
    </location>
</feature>
<feature type="strand" evidence="9">
    <location>
        <begin position="44"/>
        <end position="47"/>
    </location>
</feature>
<feature type="strand" evidence="9">
    <location>
        <begin position="52"/>
        <end position="58"/>
    </location>
</feature>
<feature type="helix" evidence="9">
    <location>
        <begin position="59"/>
        <end position="69"/>
    </location>
</feature>
<feature type="helix" evidence="9">
    <location>
        <begin position="75"/>
        <end position="88"/>
    </location>
</feature>
<feature type="strand" evidence="9">
    <location>
        <begin position="90"/>
        <end position="93"/>
    </location>
</feature>
<feature type="strand" evidence="9">
    <location>
        <begin position="103"/>
        <end position="105"/>
    </location>
</feature>
<feature type="strand" evidence="9">
    <location>
        <begin position="107"/>
        <end position="110"/>
    </location>
</feature>
<feature type="helix" evidence="9">
    <location>
        <begin position="113"/>
        <end position="115"/>
    </location>
</feature>
<feature type="turn" evidence="9">
    <location>
        <begin position="117"/>
        <end position="120"/>
    </location>
</feature>
<feature type="helix" evidence="9">
    <location>
        <begin position="125"/>
        <end position="135"/>
    </location>
</feature>
<feature type="helix" evidence="9">
    <location>
        <begin position="138"/>
        <end position="141"/>
    </location>
</feature>
<feature type="helix" evidence="9">
    <location>
        <begin position="147"/>
        <end position="159"/>
    </location>
</feature>
<feature type="helix" evidence="9">
    <location>
        <begin position="164"/>
        <end position="179"/>
    </location>
</feature>
<feature type="helix" evidence="9">
    <location>
        <begin position="183"/>
        <end position="200"/>
    </location>
</feature>
<feature type="turn" evidence="9">
    <location>
        <begin position="214"/>
        <end position="216"/>
    </location>
</feature>
<feature type="helix" evidence="9">
    <location>
        <begin position="256"/>
        <end position="270"/>
    </location>
</feature>
<feature type="helix" evidence="9">
    <location>
        <begin position="276"/>
        <end position="290"/>
    </location>
</feature>
<feature type="helix" evidence="9">
    <location>
        <begin position="291"/>
        <end position="293"/>
    </location>
</feature>
<feature type="turn" evidence="9">
    <location>
        <begin position="295"/>
        <end position="297"/>
    </location>
</feature>
<feature type="helix" evidence="9">
    <location>
        <begin position="305"/>
        <end position="308"/>
    </location>
</feature>
<feature type="helix" evidence="9">
    <location>
        <begin position="312"/>
        <end position="317"/>
    </location>
</feature>
<feature type="helix" evidence="9">
    <location>
        <begin position="324"/>
        <end position="330"/>
    </location>
</feature>
<feature type="helix" evidence="9">
    <location>
        <begin position="334"/>
        <end position="339"/>
    </location>
</feature>
<feature type="helix" evidence="9">
    <location>
        <begin position="341"/>
        <end position="353"/>
    </location>
</feature>
<feature type="helix" evidence="9">
    <location>
        <begin position="358"/>
        <end position="369"/>
    </location>
</feature>
<feature type="turn" evidence="9">
    <location>
        <begin position="374"/>
        <end position="376"/>
    </location>
</feature>
<feature type="helix" evidence="9">
    <location>
        <begin position="377"/>
        <end position="388"/>
    </location>
</feature>
<feature type="helix" evidence="9">
    <location>
        <begin position="401"/>
        <end position="411"/>
    </location>
</feature>
<feature type="turn" evidence="9">
    <location>
        <begin position="416"/>
        <end position="419"/>
    </location>
</feature>
<feature type="helix" evidence="9">
    <location>
        <begin position="420"/>
        <end position="432"/>
    </location>
</feature>
<feature type="helix" evidence="9">
    <location>
        <begin position="434"/>
        <end position="439"/>
    </location>
</feature>
<feature type="helix" evidence="9">
    <location>
        <begin position="442"/>
        <end position="448"/>
    </location>
</feature>
<comment type="function">
    <text evidence="1 2">GTPase activator component of the RGS7-GNB5 complex that regulates G protein-coupled receptor signaling cascades. The RGS7-GNB5 complex acts as an inhibitor signal transduction by promoting the GTPase activity of G protein alpha subunits, such as GNAO1, thereby driving them into their inactive GDP-bound form. May play a role in synaptic vesicle exocytosis (By similarity). Glycine-dependent regulation of the RGS7-GNB5 complex by GPR158 affects mood and cognition via its ability to regulate neuronal excitability in L2/L3 pyramidal neurons of the prefrontal cortex (By similarity). Modulates the activity of potassium channels that are activated by GNAO1 in response to muscarinic acetylcholine receptor M2/CHRM2 signaling (By similarity).</text>
</comment>
<comment type="subunit">
    <text evidence="1 2 3 8">Interacts with GNB5, forming the RGS7-GNB5 complex (PubMed:9731233). Interacts with GPR158; promotes the GTPase activator activity of the RGS7-GNB5 complex in absence of glycine, in contrast GTPase activator activity of the RGS7-GNB5 complex is inhibited in presence of glycine (By similarity). Interacts with GPR179 (By similarity). Interacts with PKD1; this prevents rapid proteasomal degradation. Interacts with RGS7BP, leading to regulate the subcellular location of the heterodimer formed with GNB5. Interacts (phosphorylated form) with 14-3-3 protein YWHAQ. Interacts with SNAPIN. Interacts with GNAI1 (By similarity). Interacts with GNAO1, GNAI3 and GNAZ (By similarity).</text>
</comment>
<comment type="subcellular location">
    <subcellularLocation>
        <location evidence="2">Cytoplasm</location>
        <location evidence="2">Cytosol</location>
    </subcellularLocation>
    <subcellularLocation>
        <location evidence="2">Cytoplasm</location>
    </subcellularLocation>
    <subcellularLocation>
        <location evidence="2">Cell membrane</location>
    </subcellularLocation>
    <subcellularLocation>
        <location evidence="2">Membrane</location>
        <topology evidence="2">Peripheral membrane protein</topology>
        <orientation evidence="2">Cytoplasmic side</orientation>
    </subcellularLocation>
    <text evidence="2">Interaction with PKD1 promotes location at the cell membrane. Interaction with RGS7BP promotes location at the cell membrane.</text>
</comment>
<comment type="tissue specificity">
    <text evidence="8">Detected in retina (at protein level) (PubMed:9731233).</text>
</comment>
<comment type="PTM">
    <text evidence="7">Palmitoylated.</text>
</comment>
<comment type="PTM">
    <text evidence="2">Ubiquitinated, leading to rapid proteasomal degradation.</text>
</comment>
<comment type="PTM">
    <text evidence="2">Phosphorylation and subsequent interaction with 14-3-3 proteins inhibits GAP activity.</text>
</comment>
<organism>
    <name type="scientific">Bos taurus</name>
    <name type="common">Bovine</name>
    <dbReference type="NCBI Taxonomy" id="9913"/>
    <lineage>
        <taxon>Eukaryota</taxon>
        <taxon>Metazoa</taxon>
        <taxon>Chordata</taxon>
        <taxon>Craniata</taxon>
        <taxon>Vertebrata</taxon>
        <taxon>Euteleostomi</taxon>
        <taxon>Mammalia</taxon>
        <taxon>Eutheria</taxon>
        <taxon>Laurasiatheria</taxon>
        <taxon>Artiodactyla</taxon>
        <taxon>Ruminantia</taxon>
        <taxon>Pecora</taxon>
        <taxon>Bovidae</taxon>
        <taxon>Bovinae</taxon>
        <taxon>Bos</taxon>
    </lineage>
</organism>
<evidence type="ECO:0000250" key="1">
    <source>
        <dbReference type="UniProtKB" id="O54829"/>
    </source>
</evidence>
<evidence type="ECO:0000250" key="2">
    <source>
        <dbReference type="UniProtKB" id="P49802"/>
    </source>
</evidence>
<evidence type="ECO:0000250" key="3">
    <source>
        <dbReference type="UniProtKB" id="P49803"/>
    </source>
</evidence>
<evidence type="ECO:0000255" key="4">
    <source>
        <dbReference type="PROSITE-ProRule" id="PRU00066"/>
    </source>
</evidence>
<evidence type="ECO:0000255" key="5">
    <source>
        <dbReference type="PROSITE-ProRule" id="PRU00171"/>
    </source>
</evidence>
<evidence type="ECO:0000256" key="6">
    <source>
        <dbReference type="SAM" id="MobiDB-lite"/>
    </source>
</evidence>
<evidence type="ECO:0000269" key="7">
    <source>
    </source>
</evidence>
<evidence type="ECO:0000269" key="8">
    <source>
    </source>
</evidence>
<evidence type="ECO:0007829" key="9">
    <source>
        <dbReference type="PDB" id="6N9G"/>
    </source>
</evidence>
<dbReference type="EMBL" id="AF011359">
    <property type="protein sequence ID" value="AAC99482.1"/>
    <property type="molecule type" value="mRNA"/>
</dbReference>
<dbReference type="EMBL" id="BC113238">
    <property type="protein sequence ID" value="AAI13239.1"/>
    <property type="molecule type" value="mRNA"/>
</dbReference>
<dbReference type="RefSeq" id="NP_776594.1">
    <property type="nucleotide sequence ID" value="NM_174169.2"/>
</dbReference>
<dbReference type="PDB" id="6N9G">
    <property type="method" value="X-ray"/>
    <property type="resolution" value="2.13 A"/>
    <property type="chains" value="A/B=1-469"/>
</dbReference>
<dbReference type="PDBsum" id="6N9G"/>
<dbReference type="SMR" id="O46470"/>
<dbReference type="BioGRID" id="158781">
    <property type="interactions" value="1"/>
</dbReference>
<dbReference type="CORUM" id="O46470"/>
<dbReference type="FunCoup" id="O46470">
    <property type="interactions" value="1429"/>
</dbReference>
<dbReference type="STRING" id="9913.ENSBTAP00000051949"/>
<dbReference type="SwissPalm" id="O46470"/>
<dbReference type="PaxDb" id="9913-ENSBTAP00000051949"/>
<dbReference type="GeneID" id="281452"/>
<dbReference type="KEGG" id="bta:281452"/>
<dbReference type="CTD" id="6000"/>
<dbReference type="VEuPathDB" id="HostDB:ENSBTAG00000005410"/>
<dbReference type="eggNOG" id="KOG3589">
    <property type="taxonomic scope" value="Eukaryota"/>
</dbReference>
<dbReference type="HOGENOM" id="CLU_025092_4_0_1"/>
<dbReference type="InParanoid" id="O46470"/>
<dbReference type="OMA" id="YVEYDPC"/>
<dbReference type="OrthoDB" id="196547at2759"/>
<dbReference type="TreeFam" id="TF351956"/>
<dbReference type="Reactome" id="R-BTA-418594">
    <property type="pathway name" value="G alpha (i) signalling events"/>
</dbReference>
<dbReference type="Reactome" id="R-BTA-6814122">
    <property type="pathway name" value="Cooperation of PDCL (PhLP1) and TRiC/CCT in G-protein beta folding"/>
</dbReference>
<dbReference type="Proteomes" id="UP000009136">
    <property type="component" value="Chromosome 16"/>
</dbReference>
<dbReference type="Bgee" id="ENSBTAG00000005410">
    <property type="expression patterns" value="Expressed in occipital lobe and 91 other cell types or tissues"/>
</dbReference>
<dbReference type="GO" id="GO:0005737">
    <property type="term" value="C:cytoplasm"/>
    <property type="evidence" value="ECO:0000318"/>
    <property type="project" value="GO_Central"/>
</dbReference>
<dbReference type="GO" id="GO:0005829">
    <property type="term" value="C:cytosol"/>
    <property type="evidence" value="ECO:0007669"/>
    <property type="project" value="UniProtKB-SubCell"/>
</dbReference>
<dbReference type="GO" id="GO:0043005">
    <property type="term" value="C:neuron projection"/>
    <property type="evidence" value="ECO:0000318"/>
    <property type="project" value="GO_Central"/>
</dbReference>
<dbReference type="GO" id="GO:0005886">
    <property type="term" value="C:plasma membrane"/>
    <property type="evidence" value="ECO:0000318"/>
    <property type="project" value="GO_Central"/>
</dbReference>
<dbReference type="GO" id="GO:0001965">
    <property type="term" value="F:G-protein alpha-subunit binding"/>
    <property type="evidence" value="ECO:0000250"/>
    <property type="project" value="UniProtKB"/>
</dbReference>
<dbReference type="GO" id="GO:0005096">
    <property type="term" value="F:GTPase activator activity"/>
    <property type="evidence" value="ECO:0000250"/>
    <property type="project" value="UniProtKB"/>
</dbReference>
<dbReference type="GO" id="GO:0007186">
    <property type="term" value="P:G protein-coupled receptor signaling pathway"/>
    <property type="evidence" value="ECO:0000318"/>
    <property type="project" value="GO_Central"/>
</dbReference>
<dbReference type="GO" id="GO:0035556">
    <property type="term" value="P:intracellular signal transduction"/>
    <property type="evidence" value="ECO:0007669"/>
    <property type="project" value="InterPro"/>
</dbReference>
<dbReference type="GO" id="GO:0045744">
    <property type="term" value="P:negative regulation of G protein-coupled receptor signaling pathway"/>
    <property type="evidence" value="ECO:0000250"/>
    <property type="project" value="UniProtKB"/>
</dbReference>
<dbReference type="CDD" id="cd04450">
    <property type="entry name" value="DEP_RGS7-like"/>
    <property type="match status" value="1"/>
</dbReference>
<dbReference type="CDD" id="cd00068">
    <property type="entry name" value="GGL"/>
    <property type="match status" value="1"/>
</dbReference>
<dbReference type="CDD" id="cd08738">
    <property type="entry name" value="RGS_RGS7"/>
    <property type="match status" value="1"/>
</dbReference>
<dbReference type="FunFam" id="1.10.10.10:FF:000162">
    <property type="entry name" value="Regulator of G-protein signaling 6"/>
    <property type="match status" value="1"/>
</dbReference>
<dbReference type="FunFam" id="1.10.1240.60:FF:000001">
    <property type="entry name" value="Regulator of G-protein signaling 6"/>
    <property type="match status" value="1"/>
</dbReference>
<dbReference type="FunFam" id="4.10.260.10:FF:000002">
    <property type="entry name" value="Regulator of G-protein signaling 6"/>
    <property type="match status" value="1"/>
</dbReference>
<dbReference type="FunFam" id="1.10.167.10:FF:000002">
    <property type="entry name" value="Regulator of G-protein signaling 6 isoform 9"/>
    <property type="match status" value="1"/>
</dbReference>
<dbReference type="Gene3D" id="1.10.1240.60">
    <property type="match status" value="1"/>
</dbReference>
<dbReference type="Gene3D" id="1.10.167.10">
    <property type="entry name" value="Regulator of G-protein Signalling 4, domain 2"/>
    <property type="match status" value="1"/>
</dbReference>
<dbReference type="Gene3D" id="4.10.260.10">
    <property type="entry name" value="Transducin (heterotrimeric G protein), gamma chain"/>
    <property type="match status" value="1"/>
</dbReference>
<dbReference type="Gene3D" id="1.10.10.10">
    <property type="entry name" value="Winged helix-like DNA-binding domain superfamily/Winged helix DNA-binding domain"/>
    <property type="match status" value="1"/>
</dbReference>
<dbReference type="InterPro" id="IPR000591">
    <property type="entry name" value="DEP_dom"/>
</dbReference>
<dbReference type="InterPro" id="IPR015898">
    <property type="entry name" value="G-protein_gamma-like_dom"/>
</dbReference>
<dbReference type="InterPro" id="IPR036284">
    <property type="entry name" value="GGL_sf"/>
</dbReference>
<dbReference type="InterPro" id="IPR016137">
    <property type="entry name" value="RGS"/>
</dbReference>
<dbReference type="InterPro" id="IPR047016">
    <property type="entry name" value="RGS6/7/9/11"/>
</dbReference>
<dbReference type="InterPro" id="IPR047017">
    <property type="entry name" value="RGS6/7/9/11_DHEX_sf"/>
</dbReference>
<dbReference type="InterPro" id="IPR040759">
    <property type="entry name" value="RGS_DHEX"/>
</dbReference>
<dbReference type="InterPro" id="IPR036305">
    <property type="entry name" value="RGS_sf"/>
</dbReference>
<dbReference type="InterPro" id="IPR044926">
    <property type="entry name" value="RGS_subdomain_2"/>
</dbReference>
<dbReference type="InterPro" id="IPR036388">
    <property type="entry name" value="WH-like_DNA-bd_sf"/>
</dbReference>
<dbReference type="InterPro" id="IPR036390">
    <property type="entry name" value="WH_DNA-bd_sf"/>
</dbReference>
<dbReference type="PANTHER" id="PTHR45746">
    <property type="entry name" value="LP21163P"/>
    <property type="match status" value="1"/>
</dbReference>
<dbReference type="PANTHER" id="PTHR45746:SF7">
    <property type="entry name" value="REGULATOR OF G-PROTEIN SIGNALING 7"/>
    <property type="match status" value="1"/>
</dbReference>
<dbReference type="Pfam" id="PF00610">
    <property type="entry name" value="DEP"/>
    <property type="match status" value="1"/>
</dbReference>
<dbReference type="Pfam" id="PF00631">
    <property type="entry name" value="G-gamma"/>
    <property type="match status" value="1"/>
</dbReference>
<dbReference type="Pfam" id="PF00615">
    <property type="entry name" value="RGS"/>
    <property type="match status" value="1"/>
</dbReference>
<dbReference type="Pfam" id="PF18148">
    <property type="entry name" value="RGS_DHEX"/>
    <property type="match status" value="1"/>
</dbReference>
<dbReference type="PRINTS" id="PR01301">
    <property type="entry name" value="RGSPROTEIN"/>
</dbReference>
<dbReference type="SMART" id="SM00049">
    <property type="entry name" value="DEP"/>
    <property type="match status" value="1"/>
</dbReference>
<dbReference type="SMART" id="SM01224">
    <property type="entry name" value="G_gamma"/>
    <property type="match status" value="1"/>
</dbReference>
<dbReference type="SMART" id="SM00224">
    <property type="entry name" value="GGL"/>
    <property type="match status" value="1"/>
</dbReference>
<dbReference type="SMART" id="SM00315">
    <property type="entry name" value="RGS"/>
    <property type="match status" value="1"/>
</dbReference>
<dbReference type="SUPFAM" id="SSF48097">
    <property type="entry name" value="Regulator of G-protein signaling, RGS"/>
    <property type="match status" value="1"/>
</dbReference>
<dbReference type="SUPFAM" id="SSF48670">
    <property type="entry name" value="Transducin (heterotrimeric G protein), gamma chain"/>
    <property type="match status" value="1"/>
</dbReference>
<dbReference type="SUPFAM" id="SSF46785">
    <property type="entry name" value="Winged helix' DNA-binding domain"/>
    <property type="match status" value="1"/>
</dbReference>
<dbReference type="PROSITE" id="PS50186">
    <property type="entry name" value="DEP"/>
    <property type="match status" value="1"/>
</dbReference>
<dbReference type="PROSITE" id="PS50132">
    <property type="entry name" value="RGS"/>
    <property type="match status" value="1"/>
</dbReference>
<sequence>MAQGNNYGQTSNGVADESPNMLVYRKMEDVIARMQDEKNGIPIRTVKSFLSKIPSVFSGSDIVQWLIKNLTIEDPVEALHLGTLMAAHGYFFPISDHVLTLKDDGTFYRFQTPYFWPSNCWEPENTDYAVYLCKRTMQNKARLELADYEAESLARLQRAFARKWEFIFMQAEAQAKVDKKRDKIERKILDSQERAFWDVHRPVPGCVNTTEVDIKKSSRMRNPHKTRKSVYGLQNDIRSHSPTHTPTPETKPPTEDELQQQIKYWQIQLDRHRLKMSKVADSLLSYTEQYVEYDPFLAPPDPSNPWLSDDTTFWELEASKEPSQQRVKRWGFGMDEALKDPVGREQFLKFLESEFSSENLRFWLAVEDLKKRPIREVPSRVQEIWQEFLAPGAPSAINLDSKSYDKTTQNVKEPGRYTFEDAQEHIYKLMKSDSYPRFIRSSAYQELLQAKKKGKSLTSKRLTSLVQSY</sequence>
<name>RGS7_BOVIN</name>
<proteinExistence type="evidence at protein level"/>